<feature type="chain" id="PRO_0000176132" description="Uracil-DNA glycosylase">
    <location>
        <begin position="1"/>
        <end position="241"/>
    </location>
</feature>
<feature type="active site" description="Proton acceptor" evidence="1">
    <location>
        <position position="68"/>
    </location>
</feature>
<dbReference type="EC" id="3.2.2.27" evidence="1"/>
<dbReference type="EMBL" id="AL591688">
    <property type="protein sequence ID" value="CAC47505.1"/>
    <property type="molecule type" value="Genomic_DNA"/>
</dbReference>
<dbReference type="RefSeq" id="NP_387032.1">
    <property type="nucleotide sequence ID" value="NC_003047.1"/>
</dbReference>
<dbReference type="RefSeq" id="WP_003528805.1">
    <property type="nucleotide sequence ID" value="NC_003047.1"/>
</dbReference>
<dbReference type="SMR" id="Q92LU5"/>
<dbReference type="EnsemblBacteria" id="CAC47505">
    <property type="protein sequence ID" value="CAC47505"/>
    <property type="gene ID" value="SMc03195"/>
</dbReference>
<dbReference type="GeneID" id="89577354"/>
<dbReference type="KEGG" id="sme:SMc03195"/>
<dbReference type="PATRIC" id="fig|266834.11.peg.4447"/>
<dbReference type="eggNOG" id="COG0692">
    <property type="taxonomic scope" value="Bacteria"/>
</dbReference>
<dbReference type="HOGENOM" id="CLU_032162_3_1_5"/>
<dbReference type="OrthoDB" id="9804372at2"/>
<dbReference type="Proteomes" id="UP000001976">
    <property type="component" value="Chromosome"/>
</dbReference>
<dbReference type="GO" id="GO:0005737">
    <property type="term" value="C:cytoplasm"/>
    <property type="evidence" value="ECO:0007669"/>
    <property type="project" value="UniProtKB-SubCell"/>
</dbReference>
<dbReference type="GO" id="GO:0004844">
    <property type="term" value="F:uracil DNA N-glycosylase activity"/>
    <property type="evidence" value="ECO:0007669"/>
    <property type="project" value="UniProtKB-UniRule"/>
</dbReference>
<dbReference type="GO" id="GO:0097510">
    <property type="term" value="P:base-excision repair, AP site formation via deaminated base removal"/>
    <property type="evidence" value="ECO:0007669"/>
    <property type="project" value="TreeGrafter"/>
</dbReference>
<dbReference type="CDD" id="cd10027">
    <property type="entry name" value="UDG-F1-like"/>
    <property type="match status" value="1"/>
</dbReference>
<dbReference type="FunFam" id="3.40.470.10:FF:000001">
    <property type="entry name" value="Uracil-DNA glycosylase"/>
    <property type="match status" value="1"/>
</dbReference>
<dbReference type="Gene3D" id="3.40.470.10">
    <property type="entry name" value="Uracil-DNA glycosylase-like domain"/>
    <property type="match status" value="1"/>
</dbReference>
<dbReference type="HAMAP" id="MF_00148">
    <property type="entry name" value="UDG"/>
    <property type="match status" value="1"/>
</dbReference>
<dbReference type="InterPro" id="IPR002043">
    <property type="entry name" value="UDG_fam1"/>
</dbReference>
<dbReference type="InterPro" id="IPR018085">
    <property type="entry name" value="Ura-DNA_Glyclase_AS"/>
</dbReference>
<dbReference type="InterPro" id="IPR005122">
    <property type="entry name" value="Uracil-DNA_glycosylase-like"/>
</dbReference>
<dbReference type="InterPro" id="IPR036895">
    <property type="entry name" value="Uracil-DNA_glycosylase-like_sf"/>
</dbReference>
<dbReference type="NCBIfam" id="NF003588">
    <property type="entry name" value="PRK05254.1-1"/>
    <property type="match status" value="1"/>
</dbReference>
<dbReference type="NCBIfam" id="NF003589">
    <property type="entry name" value="PRK05254.1-2"/>
    <property type="match status" value="1"/>
</dbReference>
<dbReference type="NCBIfam" id="NF003591">
    <property type="entry name" value="PRK05254.1-4"/>
    <property type="match status" value="1"/>
</dbReference>
<dbReference type="NCBIfam" id="NF003592">
    <property type="entry name" value="PRK05254.1-5"/>
    <property type="match status" value="1"/>
</dbReference>
<dbReference type="NCBIfam" id="TIGR00628">
    <property type="entry name" value="ung"/>
    <property type="match status" value="1"/>
</dbReference>
<dbReference type="PANTHER" id="PTHR11264">
    <property type="entry name" value="URACIL-DNA GLYCOSYLASE"/>
    <property type="match status" value="1"/>
</dbReference>
<dbReference type="PANTHER" id="PTHR11264:SF0">
    <property type="entry name" value="URACIL-DNA GLYCOSYLASE"/>
    <property type="match status" value="1"/>
</dbReference>
<dbReference type="Pfam" id="PF03167">
    <property type="entry name" value="UDG"/>
    <property type="match status" value="1"/>
</dbReference>
<dbReference type="SMART" id="SM00986">
    <property type="entry name" value="UDG"/>
    <property type="match status" value="1"/>
</dbReference>
<dbReference type="SMART" id="SM00987">
    <property type="entry name" value="UreE_C"/>
    <property type="match status" value="1"/>
</dbReference>
<dbReference type="SUPFAM" id="SSF52141">
    <property type="entry name" value="Uracil-DNA glycosylase-like"/>
    <property type="match status" value="1"/>
</dbReference>
<dbReference type="PROSITE" id="PS00130">
    <property type="entry name" value="U_DNA_GLYCOSYLASE"/>
    <property type="match status" value="1"/>
</dbReference>
<organism>
    <name type="scientific">Rhizobium meliloti (strain 1021)</name>
    <name type="common">Ensifer meliloti</name>
    <name type="synonym">Sinorhizobium meliloti</name>
    <dbReference type="NCBI Taxonomy" id="266834"/>
    <lineage>
        <taxon>Bacteria</taxon>
        <taxon>Pseudomonadati</taxon>
        <taxon>Pseudomonadota</taxon>
        <taxon>Alphaproteobacteria</taxon>
        <taxon>Hyphomicrobiales</taxon>
        <taxon>Rhizobiaceae</taxon>
        <taxon>Sinorhizobium/Ensifer group</taxon>
        <taxon>Sinorhizobium</taxon>
    </lineage>
</organism>
<gene>
    <name evidence="1" type="primary">ung</name>
    <name type="ordered locus">R02926</name>
    <name type="ORF">SMc03195</name>
</gene>
<proteinExistence type="inferred from homology"/>
<accession>Q92LU5</accession>
<keyword id="KW-0963">Cytoplasm</keyword>
<keyword id="KW-0227">DNA damage</keyword>
<keyword id="KW-0234">DNA repair</keyword>
<keyword id="KW-0378">Hydrolase</keyword>
<keyword id="KW-1185">Reference proteome</keyword>
<protein>
    <recommendedName>
        <fullName evidence="1">Uracil-DNA glycosylase</fullName>
        <shortName evidence="1">UDG</shortName>
        <ecNumber evidence="1">3.2.2.27</ecNumber>
    </recommendedName>
</protein>
<sequence>MDATIRLEESWKAVLGGEFRHGYMAELKRFLLEEKQQGRQIFPRGVEYFRALDLTPLDRVRVVILGQDPYHGDGQAHGLCFSVRPGVRTPPSLVNIYKELQEDLGIPPARHGFLESWARQGVLLLNSVLTVERGRAASHQGRGWERFTDAVIRAVNEQAQPVVFMLWGSYAQRKAAFVDRSRHLVLTAPHPSPLSAHAGFFGCRHFSKANAFLTSKGLDPIDWRLPEDPPLAVERQMAPNC</sequence>
<comment type="function">
    <text evidence="1">Excises uracil residues from the DNA which can arise as a result of misincorporation of dUMP residues by DNA polymerase or due to deamination of cytosine.</text>
</comment>
<comment type="catalytic activity">
    <reaction evidence="1">
        <text>Hydrolyzes single-stranded DNA or mismatched double-stranded DNA and polynucleotides, releasing free uracil.</text>
        <dbReference type="EC" id="3.2.2.27"/>
    </reaction>
</comment>
<comment type="subcellular location">
    <subcellularLocation>
        <location evidence="1">Cytoplasm</location>
    </subcellularLocation>
</comment>
<comment type="similarity">
    <text evidence="1">Belongs to the uracil-DNA glycosylase (UDG) superfamily. UNG family.</text>
</comment>
<reference key="1">
    <citation type="journal article" date="2001" name="Proc. Natl. Acad. Sci. U.S.A.">
        <title>Analysis of the chromosome sequence of the legume symbiont Sinorhizobium meliloti strain 1021.</title>
        <authorList>
            <person name="Capela D."/>
            <person name="Barloy-Hubler F."/>
            <person name="Gouzy J."/>
            <person name="Bothe G."/>
            <person name="Ampe F."/>
            <person name="Batut J."/>
            <person name="Boistard P."/>
            <person name="Becker A."/>
            <person name="Boutry M."/>
            <person name="Cadieu E."/>
            <person name="Dreano S."/>
            <person name="Gloux S."/>
            <person name="Godrie T."/>
            <person name="Goffeau A."/>
            <person name="Kahn D."/>
            <person name="Kiss E."/>
            <person name="Lelaure V."/>
            <person name="Masuy D."/>
            <person name="Pohl T."/>
            <person name="Portetelle D."/>
            <person name="Puehler A."/>
            <person name="Purnelle B."/>
            <person name="Ramsperger U."/>
            <person name="Renard C."/>
            <person name="Thebault P."/>
            <person name="Vandenbol M."/>
            <person name="Weidner S."/>
            <person name="Galibert F."/>
        </authorList>
    </citation>
    <scope>NUCLEOTIDE SEQUENCE [LARGE SCALE GENOMIC DNA]</scope>
    <source>
        <strain>1021</strain>
    </source>
</reference>
<reference key="2">
    <citation type="journal article" date="2001" name="Science">
        <title>The composite genome of the legume symbiont Sinorhizobium meliloti.</title>
        <authorList>
            <person name="Galibert F."/>
            <person name="Finan T.M."/>
            <person name="Long S.R."/>
            <person name="Puehler A."/>
            <person name="Abola P."/>
            <person name="Ampe F."/>
            <person name="Barloy-Hubler F."/>
            <person name="Barnett M.J."/>
            <person name="Becker A."/>
            <person name="Boistard P."/>
            <person name="Bothe G."/>
            <person name="Boutry M."/>
            <person name="Bowser L."/>
            <person name="Buhrmester J."/>
            <person name="Cadieu E."/>
            <person name="Capela D."/>
            <person name="Chain P."/>
            <person name="Cowie A."/>
            <person name="Davis R.W."/>
            <person name="Dreano S."/>
            <person name="Federspiel N.A."/>
            <person name="Fisher R.F."/>
            <person name="Gloux S."/>
            <person name="Godrie T."/>
            <person name="Goffeau A."/>
            <person name="Golding B."/>
            <person name="Gouzy J."/>
            <person name="Gurjal M."/>
            <person name="Hernandez-Lucas I."/>
            <person name="Hong A."/>
            <person name="Huizar L."/>
            <person name="Hyman R.W."/>
            <person name="Jones T."/>
            <person name="Kahn D."/>
            <person name="Kahn M.L."/>
            <person name="Kalman S."/>
            <person name="Keating D.H."/>
            <person name="Kiss E."/>
            <person name="Komp C."/>
            <person name="Lelaure V."/>
            <person name="Masuy D."/>
            <person name="Palm C."/>
            <person name="Peck M.C."/>
            <person name="Pohl T.M."/>
            <person name="Portetelle D."/>
            <person name="Purnelle B."/>
            <person name="Ramsperger U."/>
            <person name="Surzycki R."/>
            <person name="Thebault P."/>
            <person name="Vandenbol M."/>
            <person name="Vorhoelter F.J."/>
            <person name="Weidner S."/>
            <person name="Wells D.H."/>
            <person name="Wong K."/>
            <person name="Yeh K.-C."/>
            <person name="Batut J."/>
        </authorList>
    </citation>
    <scope>NUCLEOTIDE SEQUENCE [LARGE SCALE GENOMIC DNA]</scope>
    <source>
        <strain>1021</strain>
    </source>
</reference>
<name>UNG_RHIME</name>
<evidence type="ECO:0000255" key="1">
    <source>
        <dbReference type="HAMAP-Rule" id="MF_00148"/>
    </source>
</evidence>